<accession>Q04PP8</accession>
<evidence type="ECO:0000255" key="1">
    <source>
        <dbReference type="HAMAP-Rule" id="MF_01401"/>
    </source>
</evidence>
<keyword id="KW-0560">Oxidoreductase</keyword>
<protein>
    <recommendedName>
        <fullName evidence="1">Peptide methionine sulfoxide reductase MsrA</fullName>
        <shortName evidence="1">Protein-methionine-S-oxide reductase</shortName>
        <ecNumber evidence="1">1.8.4.11</ecNumber>
    </recommendedName>
    <alternativeName>
        <fullName evidence="1">Peptide-methionine (S)-S-oxide reductase</fullName>
        <shortName evidence="1">Peptide Met(O) reductase</shortName>
    </alternativeName>
</protein>
<reference key="1">
    <citation type="journal article" date="2006" name="Proc. Natl. Acad. Sci. U.S.A.">
        <title>Genome reduction in Leptospira borgpetersenii reflects limited transmission potential.</title>
        <authorList>
            <person name="Bulach D.M."/>
            <person name="Zuerner R.L."/>
            <person name="Wilson P."/>
            <person name="Seemann T."/>
            <person name="McGrath A."/>
            <person name="Cullen P.A."/>
            <person name="Davis J."/>
            <person name="Johnson M."/>
            <person name="Kuczek E."/>
            <person name="Alt D.P."/>
            <person name="Peterson-Burch B."/>
            <person name="Coppel R.L."/>
            <person name="Rood J.I."/>
            <person name="Davies J.K."/>
            <person name="Adler B."/>
        </authorList>
    </citation>
    <scope>NUCLEOTIDE SEQUENCE [LARGE SCALE GENOMIC DNA]</scope>
    <source>
        <strain>JB197</strain>
    </source>
</reference>
<name>MSRA_LEPBJ</name>
<organism>
    <name type="scientific">Leptospira borgpetersenii serovar Hardjo-bovis (strain JB197)</name>
    <dbReference type="NCBI Taxonomy" id="355277"/>
    <lineage>
        <taxon>Bacteria</taxon>
        <taxon>Pseudomonadati</taxon>
        <taxon>Spirochaetota</taxon>
        <taxon>Spirochaetia</taxon>
        <taxon>Leptospirales</taxon>
        <taxon>Leptospiraceae</taxon>
        <taxon>Leptospira</taxon>
    </lineage>
</organism>
<comment type="function">
    <text evidence="1">Has an important function as a repair enzyme for proteins that have been inactivated by oxidation. Catalyzes the reversible oxidation-reduction of methionine sulfoxide in proteins to methionine.</text>
</comment>
<comment type="catalytic activity">
    <reaction evidence="1">
        <text>L-methionyl-[protein] + [thioredoxin]-disulfide + H2O = L-methionyl-(S)-S-oxide-[protein] + [thioredoxin]-dithiol</text>
        <dbReference type="Rhea" id="RHEA:14217"/>
        <dbReference type="Rhea" id="RHEA-COMP:10698"/>
        <dbReference type="Rhea" id="RHEA-COMP:10700"/>
        <dbReference type="Rhea" id="RHEA-COMP:12313"/>
        <dbReference type="Rhea" id="RHEA-COMP:12315"/>
        <dbReference type="ChEBI" id="CHEBI:15377"/>
        <dbReference type="ChEBI" id="CHEBI:16044"/>
        <dbReference type="ChEBI" id="CHEBI:29950"/>
        <dbReference type="ChEBI" id="CHEBI:44120"/>
        <dbReference type="ChEBI" id="CHEBI:50058"/>
        <dbReference type="EC" id="1.8.4.11"/>
    </reaction>
</comment>
<comment type="catalytic activity">
    <reaction evidence="1">
        <text>[thioredoxin]-disulfide + L-methionine + H2O = L-methionine (S)-S-oxide + [thioredoxin]-dithiol</text>
        <dbReference type="Rhea" id="RHEA:19993"/>
        <dbReference type="Rhea" id="RHEA-COMP:10698"/>
        <dbReference type="Rhea" id="RHEA-COMP:10700"/>
        <dbReference type="ChEBI" id="CHEBI:15377"/>
        <dbReference type="ChEBI" id="CHEBI:29950"/>
        <dbReference type="ChEBI" id="CHEBI:50058"/>
        <dbReference type="ChEBI" id="CHEBI:57844"/>
        <dbReference type="ChEBI" id="CHEBI:58772"/>
        <dbReference type="EC" id="1.8.4.11"/>
    </reaction>
</comment>
<comment type="similarity">
    <text evidence="1">Belongs to the MsrA Met sulfoxide reductase family.</text>
</comment>
<dbReference type="EC" id="1.8.4.11" evidence="1"/>
<dbReference type="EMBL" id="CP000350">
    <property type="protein sequence ID" value="ABJ77122.1"/>
    <property type="molecule type" value="Genomic_DNA"/>
</dbReference>
<dbReference type="RefSeq" id="WP_002755244.1">
    <property type="nucleotide sequence ID" value="NC_008510.1"/>
</dbReference>
<dbReference type="SMR" id="Q04PP8"/>
<dbReference type="KEGG" id="lbj:LBJ_2709"/>
<dbReference type="HOGENOM" id="CLU_031040_10_0_12"/>
<dbReference type="Proteomes" id="UP000000656">
    <property type="component" value="Chromosome 1"/>
</dbReference>
<dbReference type="GO" id="GO:0033744">
    <property type="term" value="F:L-methionine:thioredoxin-disulfide S-oxidoreductase activity"/>
    <property type="evidence" value="ECO:0007669"/>
    <property type="project" value="RHEA"/>
</dbReference>
<dbReference type="GO" id="GO:0008113">
    <property type="term" value="F:peptide-methionine (S)-S-oxide reductase activity"/>
    <property type="evidence" value="ECO:0007669"/>
    <property type="project" value="UniProtKB-UniRule"/>
</dbReference>
<dbReference type="GO" id="GO:0036211">
    <property type="term" value="P:protein modification process"/>
    <property type="evidence" value="ECO:0007669"/>
    <property type="project" value="UniProtKB-UniRule"/>
</dbReference>
<dbReference type="Gene3D" id="3.30.1060.10">
    <property type="entry name" value="Peptide methionine sulphoxide reductase MsrA"/>
    <property type="match status" value="1"/>
</dbReference>
<dbReference type="HAMAP" id="MF_01401">
    <property type="entry name" value="MsrA"/>
    <property type="match status" value="1"/>
</dbReference>
<dbReference type="InterPro" id="IPR002569">
    <property type="entry name" value="Met_Sox_Rdtase_MsrA_dom"/>
</dbReference>
<dbReference type="InterPro" id="IPR036509">
    <property type="entry name" value="Met_Sox_Rdtase_MsrA_sf"/>
</dbReference>
<dbReference type="NCBIfam" id="TIGR00401">
    <property type="entry name" value="msrA"/>
    <property type="match status" value="1"/>
</dbReference>
<dbReference type="PANTHER" id="PTHR43774">
    <property type="entry name" value="PEPTIDE METHIONINE SULFOXIDE REDUCTASE"/>
    <property type="match status" value="1"/>
</dbReference>
<dbReference type="PANTHER" id="PTHR43774:SF1">
    <property type="entry name" value="PEPTIDE METHIONINE SULFOXIDE REDUCTASE MSRA 2"/>
    <property type="match status" value="1"/>
</dbReference>
<dbReference type="Pfam" id="PF01625">
    <property type="entry name" value="PMSR"/>
    <property type="match status" value="1"/>
</dbReference>
<dbReference type="SUPFAM" id="SSF55068">
    <property type="entry name" value="Peptide methionine sulfoxide reductase"/>
    <property type="match status" value="1"/>
</dbReference>
<proteinExistence type="inferred from homology"/>
<sequence length="176" mass="20065">MEQATLGGGCFWCLEAVYQMVEGIESVVSGYAAGQTKNPDYRSVCSGTTGHAETVQITFDSKVISYFEILEIFWISHDPTTLNRQGNDVGTQYRSIILYHSPEQKKQAEQSIQKAGEHFSDPIVTQVEILKEFYPAEDYHQNYFRTNPKQAYCHYVIKPKIDKYLKTGFKVKKEGS</sequence>
<feature type="chain" id="PRO_1000068334" description="Peptide methionine sulfoxide reductase MsrA">
    <location>
        <begin position="1"/>
        <end position="176"/>
    </location>
</feature>
<feature type="active site" evidence="1">
    <location>
        <position position="10"/>
    </location>
</feature>
<gene>
    <name evidence="1" type="primary">msrA</name>
    <name type="ordered locus">LBJ_2709</name>
</gene>